<organism>
    <name type="scientific">Haemophilus influenzae (strain ATCC 51907 / DSM 11121 / KW20 / Rd)</name>
    <dbReference type="NCBI Taxonomy" id="71421"/>
    <lineage>
        <taxon>Bacteria</taxon>
        <taxon>Pseudomonadati</taxon>
        <taxon>Pseudomonadota</taxon>
        <taxon>Gammaproteobacteria</taxon>
        <taxon>Pasteurellales</taxon>
        <taxon>Pasteurellaceae</taxon>
        <taxon>Haemophilus</taxon>
    </lineage>
</organism>
<accession>P44359</accession>
<keyword id="KW-1185">Reference proteome</keyword>
<keyword id="KW-0687">Ribonucleoprotein</keyword>
<keyword id="KW-0689">Ribosomal protein</keyword>
<keyword id="KW-0694">RNA-binding</keyword>
<keyword id="KW-0699">rRNA-binding</keyword>
<evidence type="ECO:0000255" key="1">
    <source>
        <dbReference type="HAMAP-Rule" id="MF_01363"/>
    </source>
</evidence>
<evidence type="ECO:0000305" key="2"/>
<proteinExistence type="inferred from homology"/>
<reference key="1">
    <citation type="journal article" date="1995" name="Science">
        <title>Whole-genome random sequencing and assembly of Haemophilus influenzae Rd.</title>
        <authorList>
            <person name="Fleischmann R.D."/>
            <person name="Adams M.D."/>
            <person name="White O."/>
            <person name="Clayton R.A."/>
            <person name="Kirkness E.F."/>
            <person name="Kerlavage A.R."/>
            <person name="Bult C.J."/>
            <person name="Tomb J.-F."/>
            <person name="Dougherty B.A."/>
            <person name="Merrick J.M."/>
            <person name="McKenney K."/>
            <person name="Sutton G.G."/>
            <person name="FitzHugh W."/>
            <person name="Fields C.A."/>
            <person name="Gocayne J.D."/>
            <person name="Scott J.D."/>
            <person name="Shirley R."/>
            <person name="Liu L.-I."/>
            <person name="Glodek A."/>
            <person name="Kelley J.M."/>
            <person name="Weidman J.F."/>
            <person name="Phillips C.A."/>
            <person name="Spriggs T."/>
            <person name="Hedblom E."/>
            <person name="Cotton M.D."/>
            <person name="Utterback T.R."/>
            <person name="Hanna M.C."/>
            <person name="Nguyen D.T."/>
            <person name="Saudek D.M."/>
            <person name="Brandon R.C."/>
            <person name="Fine L.D."/>
            <person name="Fritchman J.L."/>
            <person name="Fuhrmann J.L."/>
            <person name="Geoghagen N.S.M."/>
            <person name="Gnehm C.L."/>
            <person name="McDonald L.A."/>
            <person name="Small K.V."/>
            <person name="Fraser C.M."/>
            <person name="Smith H.O."/>
            <person name="Venter J.C."/>
        </authorList>
    </citation>
    <scope>NUCLEOTIDE SEQUENCE [LARGE SCALE GENOMIC DNA]</scope>
    <source>
        <strain>ATCC 51907 / DSM 11121 / KW20 / Rd</strain>
    </source>
</reference>
<feature type="chain" id="PRO_0000181002" description="Large ribosomal subunit protein bL21">
    <location>
        <begin position="1"/>
        <end position="103"/>
    </location>
</feature>
<comment type="function">
    <text evidence="1">This protein binds to 23S rRNA in the presence of protein L20.</text>
</comment>
<comment type="subunit">
    <text evidence="1">Part of the 50S ribosomal subunit. Contacts protein L20.</text>
</comment>
<comment type="similarity">
    <text evidence="1">Belongs to the bacterial ribosomal protein bL21 family.</text>
</comment>
<sequence>MYAVFQSGGKQHRVSEGQVVRLEKLELATGATVEFDSXLMVVNGEDVKIGAPVVAGAKVVAEVVAQGRGEKVKIVKFRRRKHSRKQQGHRQWFTEVKITGIQA</sequence>
<dbReference type="EMBL" id="L42023">
    <property type="protein sequence ID" value="AAC22536.1"/>
    <property type="molecule type" value="Genomic_DNA"/>
</dbReference>
<dbReference type="PIR" id="G64099">
    <property type="entry name" value="G64099"/>
</dbReference>
<dbReference type="RefSeq" id="NP_439041.1">
    <property type="nucleotide sequence ID" value="NC_000907.1"/>
</dbReference>
<dbReference type="STRING" id="71421.HI_0880"/>
<dbReference type="EnsemblBacteria" id="AAC22536">
    <property type="protein sequence ID" value="AAC22536"/>
    <property type="gene ID" value="HI_0880"/>
</dbReference>
<dbReference type="KEGG" id="hin:HI_0880"/>
<dbReference type="PATRIC" id="fig|71421.8.peg.922"/>
<dbReference type="eggNOG" id="COG0261">
    <property type="taxonomic scope" value="Bacteria"/>
</dbReference>
<dbReference type="HOGENOM" id="CLU_061463_3_2_6"/>
<dbReference type="OrthoDB" id="9813334at2"/>
<dbReference type="PhylomeDB" id="P44359"/>
<dbReference type="BioCyc" id="HINF71421:G1GJ1-920-MONOMER"/>
<dbReference type="Proteomes" id="UP000000579">
    <property type="component" value="Chromosome"/>
</dbReference>
<dbReference type="GO" id="GO:0005737">
    <property type="term" value="C:cytoplasm"/>
    <property type="evidence" value="ECO:0007669"/>
    <property type="project" value="UniProtKB-ARBA"/>
</dbReference>
<dbReference type="GO" id="GO:1990904">
    <property type="term" value="C:ribonucleoprotein complex"/>
    <property type="evidence" value="ECO:0007669"/>
    <property type="project" value="UniProtKB-KW"/>
</dbReference>
<dbReference type="GO" id="GO:0005840">
    <property type="term" value="C:ribosome"/>
    <property type="evidence" value="ECO:0007669"/>
    <property type="project" value="UniProtKB-KW"/>
</dbReference>
<dbReference type="GO" id="GO:0019843">
    <property type="term" value="F:rRNA binding"/>
    <property type="evidence" value="ECO:0007669"/>
    <property type="project" value="UniProtKB-UniRule"/>
</dbReference>
<dbReference type="GO" id="GO:0003735">
    <property type="term" value="F:structural constituent of ribosome"/>
    <property type="evidence" value="ECO:0000318"/>
    <property type="project" value="GO_Central"/>
</dbReference>
<dbReference type="GO" id="GO:0006412">
    <property type="term" value="P:translation"/>
    <property type="evidence" value="ECO:0007669"/>
    <property type="project" value="UniProtKB-UniRule"/>
</dbReference>
<dbReference type="HAMAP" id="MF_01363">
    <property type="entry name" value="Ribosomal_bL21"/>
    <property type="match status" value="1"/>
</dbReference>
<dbReference type="InterPro" id="IPR028909">
    <property type="entry name" value="bL21-like"/>
</dbReference>
<dbReference type="InterPro" id="IPR036164">
    <property type="entry name" value="bL21-like_sf"/>
</dbReference>
<dbReference type="InterPro" id="IPR001787">
    <property type="entry name" value="Ribosomal_bL21"/>
</dbReference>
<dbReference type="InterPro" id="IPR018258">
    <property type="entry name" value="Ribosomal_bL21_CS"/>
</dbReference>
<dbReference type="NCBIfam" id="TIGR00061">
    <property type="entry name" value="L21"/>
    <property type="match status" value="1"/>
</dbReference>
<dbReference type="PANTHER" id="PTHR21349">
    <property type="entry name" value="50S RIBOSOMAL PROTEIN L21"/>
    <property type="match status" value="1"/>
</dbReference>
<dbReference type="PANTHER" id="PTHR21349:SF0">
    <property type="entry name" value="LARGE RIBOSOMAL SUBUNIT PROTEIN BL21M"/>
    <property type="match status" value="1"/>
</dbReference>
<dbReference type="Pfam" id="PF00829">
    <property type="entry name" value="Ribosomal_L21p"/>
    <property type="match status" value="1"/>
</dbReference>
<dbReference type="SUPFAM" id="SSF141091">
    <property type="entry name" value="L21p-like"/>
    <property type="match status" value="1"/>
</dbReference>
<dbReference type="PROSITE" id="PS01169">
    <property type="entry name" value="RIBOSOMAL_L21"/>
    <property type="match status" value="1"/>
</dbReference>
<gene>
    <name evidence="1" type="primary">rplU</name>
    <name evidence="1" type="synonym">rpl21</name>
    <name type="ordered locus">HI_0880</name>
</gene>
<protein>
    <recommendedName>
        <fullName evidence="1">Large ribosomal subunit protein bL21</fullName>
    </recommendedName>
    <alternativeName>
        <fullName evidence="2">50S ribosomal protein L21</fullName>
    </alternativeName>
</protein>
<name>RL21_HAEIN</name>